<name>ACYP_PELTS</name>
<accession>A5D1R6</accession>
<feature type="chain" id="PRO_0000326766" description="Acylphosphatase">
    <location>
        <begin position="1"/>
        <end position="92"/>
    </location>
</feature>
<feature type="domain" description="Acylphosphatase-like" evidence="1">
    <location>
        <begin position="5"/>
        <end position="92"/>
    </location>
</feature>
<feature type="active site" evidence="1">
    <location>
        <position position="20"/>
    </location>
</feature>
<feature type="active site" evidence="1">
    <location>
        <position position="38"/>
    </location>
</feature>
<reference key="1">
    <citation type="journal article" date="2008" name="Genome Res.">
        <title>The genome of Pelotomaculum thermopropionicum reveals niche-associated evolution in anaerobic microbiota.</title>
        <authorList>
            <person name="Kosaka T."/>
            <person name="Kato S."/>
            <person name="Shimoyama T."/>
            <person name="Ishii S."/>
            <person name="Abe T."/>
            <person name="Watanabe K."/>
        </authorList>
    </citation>
    <scope>NUCLEOTIDE SEQUENCE [LARGE SCALE GENOMIC DNA]</scope>
    <source>
        <strain>DSM 13744 / JCM 10971 / SI</strain>
    </source>
</reference>
<gene>
    <name type="primary">acyP</name>
    <name type="ordered locus">PTH_1653</name>
</gene>
<evidence type="ECO:0000255" key="1">
    <source>
        <dbReference type="PROSITE-ProRule" id="PRU00520"/>
    </source>
</evidence>
<evidence type="ECO:0000305" key="2"/>
<keyword id="KW-0378">Hydrolase</keyword>
<keyword id="KW-1185">Reference proteome</keyword>
<dbReference type="EC" id="3.6.1.7"/>
<dbReference type="EMBL" id="AP009389">
    <property type="protein sequence ID" value="BAF59834.1"/>
    <property type="molecule type" value="Genomic_DNA"/>
</dbReference>
<dbReference type="SMR" id="A5D1R6"/>
<dbReference type="STRING" id="370438.PTH_1653"/>
<dbReference type="KEGG" id="pth:PTH_1653"/>
<dbReference type="eggNOG" id="COG1254">
    <property type="taxonomic scope" value="Bacteria"/>
</dbReference>
<dbReference type="HOGENOM" id="CLU_141932_3_2_9"/>
<dbReference type="Proteomes" id="UP000006556">
    <property type="component" value="Chromosome"/>
</dbReference>
<dbReference type="GO" id="GO:0003998">
    <property type="term" value="F:acylphosphatase activity"/>
    <property type="evidence" value="ECO:0007669"/>
    <property type="project" value="UniProtKB-EC"/>
</dbReference>
<dbReference type="FunFam" id="3.30.70.100:FF:000012">
    <property type="entry name" value="Acylphosphatase"/>
    <property type="match status" value="1"/>
</dbReference>
<dbReference type="Gene3D" id="3.30.70.100">
    <property type="match status" value="1"/>
</dbReference>
<dbReference type="InterPro" id="IPR020456">
    <property type="entry name" value="Acylphosphatase"/>
</dbReference>
<dbReference type="InterPro" id="IPR001792">
    <property type="entry name" value="Acylphosphatase-like_dom"/>
</dbReference>
<dbReference type="InterPro" id="IPR036046">
    <property type="entry name" value="Acylphosphatase-like_dom_sf"/>
</dbReference>
<dbReference type="InterPro" id="IPR017968">
    <property type="entry name" value="Acylphosphatase_CS"/>
</dbReference>
<dbReference type="NCBIfam" id="NF011013">
    <property type="entry name" value="PRK14441.1"/>
    <property type="match status" value="1"/>
</dbReference>
<dbReference type="NCBIfam" id="NF011016">
    <property type="entry name" value="PRK14444.1"/>
    <property type="match status" value="1"/>
</dbReference>
<dbReference type="PANTHER" id="PTHR47268">
    <property type="entry name" value="ACYLPHOSPHATASE"/>
    <property type="match status" value="1"/>
</dbReference>
<dbReference type="PANTHER" id="PTHR47268:SF4">
    <property type="entry name" value="ACYLPHOSPHATASE"/>
    <property type="match status" value="1"/>
</dbReference>
<dbReference type="Pfam" id="PF00708">
    <property type="entry name" value="Acylphosphatase"/>
    <property type="match status" value="1"/>
</dbReference>
<dbReference type="PRINTS" id="PR00112">
    <property type="entry name" value="ACYLPHPHTASE"/>
</dbReference>
<dbReference type="SUPFAM" id="SSF54975">
    <property type="entry name" value="Acylphosphatase/BLUF domain-like"/>
    <property type="match status" value="1"/>
</dbReference>
<dbReference type="PROSITE" id="PS00150">
    <property type="entry name" value="ACYLPHOSPHATASE_1"/>
    <property type="match status" value="1"/>
</dbReference>
<dbReference type="PROSITE" id="PS51160">
    <property type="entry name" value="ACYLPHOSPHATASE_3"/>
    <property type="match status" value="1"/>
</dbReference>
<protein>
    <recommendedName>
        <fullName>Acylphosphatase</fullName>
        <ecNumber>3.6.1.7</ecNumber>
    </recommendedName>
    <alternativeName>
        <fullName>Acylphosphate phosphohydrolase</fullName>
    </alternativeName>
</protein>
<organism>
    <name type="scientific">Pelotomaculum thermopropionicum (strain DSM 13744 / JCM 10971 / SI)</name>
    <dbReference type="NCBI Taxonomy" id="370438"/>
    <lineage>
        <taxon>Bacteria</taxon>
        <taxon>Bacillati</taxon>
        <taxon>Bacillota</taxon>
        <taxon>Clostridia</taxon>
        <taxon>Eubacteriales</taxon>
        <taxon>Desulfotomaculaceae</taxon>
        <taxon>Pelotomaculum</taxon>
    </lineage>
</organism>
<comment type="catalytic activity">
    <reaction>
        <text>an acyl phosphate + H2O = a carboxylate + phosphate + H(+)</text>
        <dbReference type="Rhea" id="RHEA:14965"/>
        <dbReference type="ChEBI" id="CHEBI:15377"/>
        <dbReference type="ChEBI" id="CHEBI:15378"/>
        <dbReference type="ChEBI" id="CHEBI:29067"/>
        <dbReference type="ChEBI" id="CHEBI:43474"/>
        <dbReference type="ChEBI" id="CHEBI:59918"/>
        <dbReference type="EC" id="3.6.1.7"/>
    </reaction>
</comment>
<comment type="similarity">
    <text evidence="2">Belongs to the acylphosphatase family.</text>
</comment>
<proteinExistence type="inferred from homology"/>
<sequence>MSRARAHVVVSGKVQGVYFRSETRDQALALGVTGWIRNRTDGTVEGVFEGDREMVEKLVRWCWQGPPAAEVSNVQVEWQDYTGEFSGFKIAF</sequence>